<name>A1HB2_LOXIN</name>
<dbReference type="EC" id="4.6.1.-" evidence="3"/>
<dbReference type="EMBL" id="EF535253">
    <property type="protein sequence ID" value="ABU43332.1"/>
    <property type="molecule type" value="mRNA"/>
</dbReference>
<dbReference type="PDB" id="4RW3">
    <property type="method" value="X-ray"/>
    <property type="resolution" value="1.72 A"/>
    <property type="chains" value="A=24-302"/>
</dbReference>
<dbReference type="PDB" id="4RW5">
    <property type="method" value="X-ray"/>
    <property type="resolution" value="1.64 A"/>
    <property type="chains" value="A=24-302"/>
</dbReference>
<dbReference type="PDBsum" id="4RW3"/>
<dbReference type="PDBsum" id="4RW5"/>
<dbReference type="SMR" id="P0CE82"/>
<dbReference type="EvolutionaryTrace" id="P0CE82"/>
<dbReference type="GO" id="GO:0005576">
    <property type="term" value="C:extracellular region"/>
    <property type="evidence" value="ECO:0007669"/>
    <property type="project" value="UniProtKB-SubCell"/>
</dbReference>
<dbReference type="GO" id="GO:0016829">
    <property type="term" value="F:lyase activity"/>
    <property type="evidence" value="ECO:0007669"/>
    <property type="project" value="UniProtKB-KW"/>
</dbReference>
<dbReference type="GO" id="GO:0046872">
    <property type="term" value="F:metal ion binding"/>
    <property type="evidence" value="ECO:0007669"/>
    <property type="project" value="UniProtKB-KW"/>
</dbReference>
<dbReference type="GO" id="GO:0008081">
    <property type="term" value="F:phosphoric diester hydrolase activity"/>
    <property type="evidence" value="ECO:0007669"/>
    <property type="project" value="InterPro"/>
</dbReference>
<dbReference type="GO" id="GO:0090729">
    <property type="term" value="F:toxin activity"/>
    <property type="evidence" value="ECO:0007669"/>
    <property type="project" value="UniProtKB-KW"/>
</dbReference>
<dbReference type="GO" id="GO:0031640">
    <property type="term" value="P:killing of cells of another organism"/>
    <property type="evidence" value="ECO:0007669"/>
    <property type="project" value="UniProtKB-KW"/>
</dbReference>
<dbReference type="GO" id="GO:0016042">
    <property type="term" value="P:lipid catabolic process"/>
    <property type="evidence" value="ECO:0007669"/>
    <property type="project" value="UniProtKB-KW"/>
</dbReference>
<dbReference type="CDD" id="cd08576">
    <property type="entry name" value="GDPD_like_SMaseD_PLD"/>
    <property type="match status" value="1"/>
</dbReference>
<dbReference type="Gene3D" id="3.20.20.190">
    <property type="entry name" value="Phosphatidylinositol (PI) phosphodiesterase"/>
    <property type="match status" value="1"/>
</dbReference>
<dbReference type="InterPro" id="IPR017946">
    <property type="entry name" value="PLC-like_Pdiesterase_TIM-brl"/>
</dbReference>
<dbReference type="Pfam" id="PF13653">
    <property type="entry name" value="GDPD_2"/>
    <property type="match status" value="1"/>
</dbReference>
<dbReference type="SUPFAM" id="SSF51695">
    <property type="entry name" value="PLC-like phosphodiesterases"/>
    <property type="match status" value="1"/>
</dbReference>
<feature type="signal peptide" evidence="4">
    <location>
        <begin position="1" status="less than"/>
        <end position="14"/>
    </location>
</feature>
<feature type="propeptide" id="PRO_0000392741" evidence="6">
    <location>
        <begin position="15"/>
        <end position="22"/>
    </location>
</feature>
<feature type="chain" id="PRO_0000392742" description="Dermonecrotic toxin LiSicTox-alphaIA1bii" evidence="10">
    <location>
        <begin position="23"/>
        <end position="302"/>
    </location>
</feature>
<feature type="active site" evidence="5">
    <location>
        <position position="34"/>
    </location>
</feature>
<feature type="active site" description="Nucleophile" evidence="9">
    <location>
        <position position="70"/>
    </location>
</feature>
<feature type="binding site" evidence="5 11 12">
    <location>
        <position position="54"/>
    </location>
    <ligand>
        <name>Mg(2+)</name>
        <dbReference type="ChEBI" id="CHEBI:18420"/>
    </ligand>
</feature>
<feature type="binding site" evidence="5 11 12">
    <location>
        <position position="56"/>
    </location>
    <ligand>
        <name>Mg(2+)</name>
        <dbReference type="ChEBI" id="CHEBI:18420"/>
    </ligand>
</feature>
<feature type="binding site" evidence="5 11 12">
    <location>
        <position position="114"/>
    </location>
    <ligand>
        <name>Mg(2+)</name>
        <dbReference type="ChEBI" id="CHEBI:18420"/>
    </ligand>
</feature>
<feature type="disulfide bond" evidence="5 11 12">
    <location>
        <begin position="74"/>
        <end position="80"/>
    </location>
</feature>
<feature type="disulfide bond" evidence="5 11 12">
    <location>
        <begin position="76"/>
        <end position="219"/>
    </location>
</feature>
<feature type="sequence conflict" description="In Ref. 2; AA sequence." evidence="8" ref="2">
    <original>E</original>
    <variation>EI</variation>
    <location>
        <position position="54"/>
    </location>
</feature>
<feature type="sequence conflict" description="In Ref. 2; AA sequence." evidence="8" ref="2">
    <original>S</original>
    <variation>F</variation>
    <location>
        <position position="58"/>
    </location>
</feature>
<feature type="non-terminal residue">
    <location>
        <position position="1"/>
    </location>
</feature>
<feature type="strand" evidence="13">
    <location>
        <begin position="27"/>
        <end position="34"/>
    </location>
</feature>
<feature type="helix" evidence="13">
    <location>
        <begin position="39"/>
        <end position="47"/>
    </location>
</feature>
<feature type="strand" evidence="13">
    <location>
        <begin position="51"/>
        <end position="59"/>
    </location>
</feature>
<feature type="strand" evidence="13">
    <location>
        <begin position="65"/>
        <end position="68"/>
    </location>
</feature>
<feature type="helix" evidence="13">
    <location>
        <begin position="86"/>
        <end position="96"/>
    </location>
</feature>
<feature type="strand" evidence="13">
    <location>
        <begin position="110"/>
        <end position="115"/>
    </location>
</feature>
<feature type="helix" evidence="13">
    <location>
        <begin position="117"/>
        <end position="119"/>
    </location>
</feature>
<feature type="helix" evidence="13">
    <location>
        <begin position="122"/>
        <end position="124"/>
    </location>
</feature>
<feature type="helix" evidence="13">
    <location>
        <begin position="125"/>
        <end position="139"/>
    </location>
</feature>
<feature type="helix" evidence="13">
    <location>
        <begin position="142"/>
        <end position="144"/>
    </location>
</feature>
<feature type="strand" evidence="13">
    <location>
        <begin position="151"/>
        <end position="157"/>
    </location>
</feature>
<feature type="helix" evidence="13">
    <location>
        <begin position="159"/>
        <end position="162"/>
    </location>
</feature>
<feature type="helix" evidence="13">
    <location>
        <begin position="163"/>
        <end position="174"/>
    </location>
</feature>
<feature type="helix" evidence="13">
    <location>
        <begin position="178"/>
        <end position="183"/>
    </location>
</feature>
<feature type="strand" evidence="13">
    <location>
        <begin position="184"/>
        <end position="188"/>
    </location>
</feature>
<feature type="helix" evidence="13">
    <location>
        <begin position="194"/>
        <end position="204"/>
    </location>
</feature>
<feature type="strand" evidence="13">
    <location>
        <begin position="208"/>
        <end position="215"/>
    </location>
</feature>
<feature type="helix" evidence="13">
    <location>
        <begin position="225"/>
        <end position="234"/>
    </location>
</feature>
<feature type="strand" evidence="13">
    <location>
        <begin position="243"/>
        <end position="247"/>
    </location>
</feature>
<feature type="helix" evidence="13">
    <location>
        <begin position="252"/>
        <end position="260"/>
    </location>
</feature>
<feature type="strand" evidence="13">
    <location>
        <begin position="264"/>
        <end position="269"/>
    </location>
</feature>
<feature type="helix" evidence="13">
    <location>
        <begin position="271"/>
        <end position="278"/>
    </location>
</feature>
<feature type="helix" evidence="13">
    <location>
        <begin position="281"/>
        <end position="284"/>
    </location>
</feature>
<feature type="strand" evidence="13">
    <location>
        <begin position="287"/>
        <end position="289"/>
    </location>
</feature>
<keyword id="KW-0002">3D-structure</keyword>
<keyword id="KW-0204">Cytolysis</keyword>
<keyword id="KW-1061">Dermonecrotic toxin</keyword>
<keyword id="KW-0903">Direct protein sequencing</keyword>
<keyword id="KW-1015">Disulfide bond</keyword>
<keyword id="KW-0354">Hemolysis</keyword>
<keyword id="KW-0442">Lipid degradation</keyword>
<keyword id="KW-0443">Lipid metabolism</keyword>
<keyword id="KW-0456">Lyase</keyword>
<keyword id="KW-0460">Magnesium</keyword>
<keyword id="KW-0479">Metal-binding</keyword>
<keyword id="KW-0964">Secreted</keyword>
<keyword id="KW-0732">Signal</keyword>
<keyword id="KW-0800">Toxin</keyword>
<keyword id="KW-0865">Zymogen</keyword>
<reference key="1">
    <citation type="journal article" date="2007" name="Toxicon">
        <title>The Loxtox protein family in Loxosceles intermedia (Mello-Leitao) venom.</title>
        <authorList>
            <person name="Kalapothakis E."/>
            <person name="Chatzaki M."/>
            <person name="Goncalves-Dornelas H."/>
            <person name="de Castro C.S."/>
            <person name="Silvestre F.G."/>
            <person name="Laborne F.V."/>
            <person name="de Moura J.F."/>
            <person name="Veiga S.S."/>
            <person name="Chavez-Olortegui C."/>
            <person name="Granier C."/>
            <person name="Barbaro K.C."/>
        </authorList>
    </citation>
    <scope>NUCLEOTIDE SEQUENCE [MRNA]</scope>
    <source>
        <tissue>Venom gland</tissue>
    </source>
</reference>
<reference key="2">
    <citation type="journal article" date="1998" name="Biochem. Biophys. Res. Commun.">
        <title>Sphingomyelinases in the venom of the spider Loxosceles intermedia are responsible for both dermonecrosis and complement-dependent hemolysis.</title>
        <authorList>
            <person name="Tambourgi D.V."/>
            <person name="Magnoli F.C."/>
            <person name="van den Berg C.W."/>
            <person name="Morgan B.P."/>
            <person name="de Araujo P.S."/>
            <person name="Alves E.W."/>
            <person name="Da Silva W.D."/>
        </authorList>
    </citation>
    <scope>PROTEIN SEQUENCE OF 23-60</scope>
    <scope>FUNCTION</scope>
    <scope>CATALYTIC ACTIVITY</scope>
    <scope>SUBCELLULAR LOCATION</scope>
    <source>
        <tissue>Venom</tissue>
    </source>
</reference>
<reference key="3">
    <citation type="journal article" date="2015" name="Curr. Protein Pept. Sci.">
        <title>Structural insights into substrate binding of brown spider venom class II phospholipases D.</title>
        <authorList>
            <person name="Coronado M.A."/>
            <person name="Ullah A."/>
            <person name="da Silva L.S."/>
            <person name="Chaves-Moreira D."/>
            <person name="Vuitika L."/>
            <person name="Chaim O.M."/>
            <person name="Veiga S.S."/>
            <person name="Chahine J."/>
            <person name="Murakami M.T."/>
            <person name="Arni R.K."/>
        </authorList>
    </citation>
    <scope>X-RAY CRYSTALLOGRAPHY (1.64 ANGSTROMS) OF 24-302 (WILD-TYPE AND H34A MUTANT) IN COMPLEX WITH MAGNESIUM</scope>
    <scope>METAL-BINDING SITES</scope>
    <scope>COFACTOR</scope>
    <scope>DISULFIDE BOND</scope>
    <scope>3D-STRUCTURE MODELING OF MUTANTS H34A; H70A; K116A AND Y245A</scope>
</reference>
<protein>
    <recommendedName>
        <fullName>Dermonecrotic toxin LiSicTox-alphaIA1bii</fullName>
        <ecNumber evidence="3">4.6.1.-</ecNumber>
    </recommendedName>
    <alternativeName>
        <fullName evidence="7">LiRecDT1</fullName>
    </alternativeName>
    <alternativeName>
        <fullName>Loxtox i4</fullName>
    </alternativeName>
    <alternativeName>
        <fullName>Phospholipase D</fullName>
        <shortName>PLD</shortName>
    </alternativeName>
    <alternativeName>
        <fullName>Sphingomyelin phosphodiesterase D 1</fullName>
        <shortName>SMD 1</shortName>
        <shortName>SMase D 1</shortName>
        <shortName>Sphingomyelinase D 1</shortName>
    </alternativeName>
</protein>
<evidence type="ECO:0000250" key="1">
    <source>
        <dbReference type="UniProtKB" id="A0A0D4WTV1"/>
    </source>
</evidence>
<evidence type="ECO:0000250" key="2">
    <source>
        <dbReference type="UniProtKB" id="A0A0D4WV12"/>
    </source>
</evidence>
<evidence type="ECO:0000250" key="3">
    <source>
        <dbReference type="UniProtKB" id="Q4ZFU2"/>
    </source>
</evidence>
<evidence type="ECO:0000255" key="4"/>
<evidence type="ECO:0000269" key="5">
    <source>
    </source>
</evidence>
<evidence type="ECO:0000269" key="6">
    <source>
    </source>
</evidence>
<evidence type="ECO:0000303" key="7">
    <source>
    </source>
</evidence>
<evidence type="ECO:0000305" key="8"/>
<evidence type="ECO:0000305" key="9">
    <source>
    </source>
</evidence>
<evidence type="ECO:0000305" key="10">
    <source>
    </source>
</evidence>
<evidence type="ECO:0000312" key="11">
    <source>
        <dbReference type="PDB" id="4RW3"/>
    </source>
</evidence>
<evidence type="ECO:0000312" key="12">
    <source>
        <dbReference type="PDB" id="4RW5"/>
    </source>
</evidence>
<evidence type="ECO:0007829" key="13">
    <source>
        <dbReference type="PDB" id="4RW5"/>
    </source>
</evidence>
<comment type="function">
    <text evidence="1 6">Dermonecrotic toxins cleave the phosphodiester linkage between the phosphate and headgroup of certain phospholipids (sphingolipid and lysolipid substrates), forming an alcohol (often choline) and a cyclic phosphate (By similarity). This toxin acts on sphingomyelin (SM) (PubMed:9790962). It may also act on ceramide phosphoethanolamine (CPE), lysophosphatidylcholine (LPC) and lysophosphatidylethanolamine (LPE), but not on lysophosphatidylserine (LPS), and lysophosphatidylglycerol (LPG) (By similarity). It acts by transphosphatidylation, releasing exclusively cyclic phosphate products as second products (By similarity). Induces hemolysis, dermonecrosis, vascular permeability and platelet aggregation (PubMed:9790962).</text>
</comment>
<comment type="catalytic activity">
    <reaction evidence="10">
        <text>an N-(acyl)-sphingosylphosphocholine = an N-(acyl)-sphingosyl-1,3-cyclic phosphate + choline</text>
        <dbReference type="Rhea" id="RHEA:60652"/>
        <dbReference type="ChEBI" id="CHEBI:15354"/>
        <dbReference type="ChEBI" id="CHEBI:64583"/>
        <dbReference type="ChEBI" id="CHEBI:143892"/>
    </reaction>
</comment>
<comment type="catalytic activity">
    <reaction evidence="1">
        <text>an N-(acyl)-sphingosylphosphoethanolamine = an N-(acyl)-sphingosyl-1,3-cyclic phosphate + ethanolamine</text>
        <dbReference type="Rhea" id="RHEA:60648"/>
        <dbReference type="ChEBI" id="CHEBI:57603"/>
        <dbReference type="ChEBI" id="CHEBI:143891"/>
        <dbReference type="ChEBI" id="CHEBI:143892"/>
    </reaction>
</comment>
<comment type="catalytic activity">
    <reaction evidence="1">
        <text>a 1-acyl-sn-glycero-3-phosphocholine = a 1-acyl-sn-glycero-2,3-cyclic phosphate + choline</text>
        <dbReference type="Rhea" id="RHEA:60700"/>
        <dbReference type="ChEBI" id="CHEBI:15354"/>
        <dbReference type="ChEBI" id="CHEBI:58168"/>
        <dbReference type="ChEBI" id="CHEBI:143947"/>
    </reaction>
</comment>
<comment type="catalytic activity">
    <reaction evidence="1">
        <text>a 1-acyl-sn-glycero-3-phosphoethanolamine = a 1-acyl-sn-glycero-2,3-cyclic phosphate + ethanolamine</text>
        <dbReference type="Rhea" id="RHEA:60704"/>
        <dbReference type="ChEBI" id="CHEBI:57603"/>
        <dbReference type="ChEBI" id="CHEBI:64381"/>
        <dbReference type="ChEBI" id="CHEBI:143947"/>
    </reaction>
</comment>
<comment type="cofactor">
    <cofactor evidence="5 11 12">
        <name>Mg(2+)</name>
        <dbReference type="ChEBI" id="CHEBI:18420"/>
    </cofactor>
    <text evidence="5 11 12">Binds 1 Mg(2+) ion per subunit.</text>
</comment>
<comment type="subcellular location">
    <subcellularLocation>
        <location evidence="6">Secreted</location>
    </subcellularLocation>
</comment>
<comment type="tissue specificity">
    <text evidence="10">Expressed by the venom gland.</text>
</comment>
<comment type="similarity">
    <text evidence="8">Belongs to the arthropod phospholipase D family. Class II subfamily. Class IIa sub-subfamily.</text>
</comment>
<comment type="caution">
    <text evidence="1 2 3">The most common activity assay for dermonecrotic toxins detects enzymatic activity by monitoring choline release from substrate. Liberation of choline from sphingomyelin (SM) or lysophosphatidylcholine (LPC) is commonly assumed to result from substrate hydrolysis, giving either ceramide-1-phosphate (C1P) or lysophosphatidic acid (LPA), respectively, as a second product. However, two studies from Lajoie and colleagues (2013 and 2015) report the observation of exclusive formation of cyclic phosphate products as second products, resulting from intramolecular transphosphatidylation. Cyclic phosphates have vastly different biological properties from their monoester counterparts, and they may be relevant to the pathology of brown spider envenomation.</text>
</comment>
<proteinExistence type="evidence at protein level"/>
<sequence>ARVVLGCWSVLSQAAQTDDEERAGNRRPIWIMGHMVNAIGQIDEFVNLGANSIETDVSFDDNANPEYTYHGIPCDCGRNCKKYENFNDFLKGLRSATTPGNSKYQEKLVLVVFDLKTGSLYDNQANDAGKKLAKNLLQHYWNNGNNGGRAYIVLSIPDLNHYPLIKGFKDQLTKDGHPELMDKVGHDFSGNDDIGDVGKAYKKAGITGHIWQSDGITNCLPRGLSRVNAAVANRDSANGFINKVYYWTVDKRSTTRDALDAGVDGIMTNYPDVITDVLNEAAYKKKFRVATYDDNPWVTFKK</sequence>
<organism>
    <name type="scientific">Loxosceles intermedia</name>
    <name type="common">Brown spider</name>
    <dbReference type="NCBI Taxonomy" id="58218"/>
    <lineage>
        <taxon>Eukaryota</taxon>
        <taxon>Metazoa</taxon>
        <taxon>Ecdysozoa</taxon>
        <taxon>Arthropoda</taxon>
        <taxon>Chelicerata</taxon>
        <taxon>Arachnida</taxon>
        <taxon>Araneae</taxon>
        <taxon>Araneomorphae</taxon>
        <taxon>Haplogynae</taxon>
        <taxon>Scytodoidea</taxon>
        <taxon>Sicariidae</taxon>
        <taxon>Loxosceles</taxon>
    </lineage>
</organism>
<accession>P0CE82</accession>
<accession>B2KKV9</accession>
<accession>P83045</accession>
<accession>Q3HL91</accession>
<accession>Q6W8Q5</accession>
<accession>Q7YW73</accession>